<reference key="1">
    <citation type="journal article" date="1993" name="Mol. Gen. Genet.">
        <title>Nucleotide sequence of class D tetracycline resistance genes from Salmonella ordonez.</title>
        <authorList>
            <person name="Allard J.D."/>
            <person name="Gibson M.L."/>
            <person name="Vu L.H."/>
            <person name="Nguyen T.T."/>
            <person name="Bertrand K.P."/>
        </authorList>
    </citation>
    <scope>NUCLEOTIDE SEQUENCE [GENOMIC DNA]</scope>
    <source>
        <strain>BM2000</strain>
    </source>
</reference>
<protein>
    <recommendedName>
        <fullName>Tetracycline resistance protein, class D</fullName>
        <shortName>TetA(D)</shortName>
    </recommendedName>
</protein>
<organism>
    <name type="scientific">Salmonella ordonez</name>
    <dbReference type="NCBI Taxonomy" id="612"/>
    <lineage>
        <taxon>Bacteria</taxon>
        <taxon>Pseudomonadati</taxon>
        <taxon>Pseudomonadota</taxon>
        <taxon>Gammaproteobacteria</taxon>
        <taxon>Enterobacterales</taxon>
        <taxon>Enterobacteriaceae</taxon>
        <taxon>Salmonella</taxon>
    </lineage>
</organism>
<keyword id="KW-0046">Antibiotic resistance</keyword>
<keyword id="KW-0050">Antiport</keyword>
<keyword id="KW-0997">Cell inner membrane</keyword>
<keyword id="KW-1003">Cell membrane</keyword>
<keyword id="KW-0375">Hydrogen ion transport</keyword>
<keyword id="KW-0406">Ion transport</keyword>
<keyword id="KW-0472">Membrane</keyword>
<keyword id="KW-0614">Plasmid</keyword>
<keyword id="KW-0812">Transmembrane</keyword>
<keyword id="KW-1133">Transmembrane helix</keyword>
<keyword id="KW-0813">Transport</keyword>
<dbReference type="EMBL" id="X65876">
    <property type="protein sequence ID" value="CAA46706.1"/>
    <property type="molecule type" value="Genomic_DNA"/>
</dbReference>
<dbReference type="PIR" id="S30286">
    <property type="entry name" value="S30286"/>
</dbReference>
<dbReference type="RefSeq" id="WP_063856073.1">
    <property type="nucleotide sequence ID" value="NG_048182.1"/>
</dbReference>
<dbReference type="SMR" id="P33733"/>
<dbReference type="KEGG" id="ag:CAA46706"/>
<dbReference type="GO" id="GO:0005886">
    <property type="term" value="C:plasma membrane"/>
    <property type="evidence" value="ECO:0007669"/>
    <property type="project" value="UniProtKB-SubCell"/>
</dbReference>
<dbReference type="GO" id="GO:0015297">
    <property type="term" value="F:antiporter activity"/>
    <property type="evidence" value="ECO:0007669"/>
    <property type="project" value="UniProtKB-KW"/>
</dbReference>
<dbReference type="GO" id="GO:1902600">
    <property type="term" value="P:proton transmembrane transport"/>
    <property type="evidence" value="ECO:0007669"/>
    <property type="project" value="UniProtKB-KW"/>
</dbReference>
<dbReference type="GO" id="GO:0046677">
    <property type="term" value="P:response to antibiotic"/>
    <property type="evidence" value="ECO:0007669"/>
    <property type="project" value="UniProtKB-KW"/>
</dbReference>
<dbReference type="CDD" id="cd17388">
    <property type="entry name" value="MFS_TetA"/>
    <property type="match status" value="1"/>
</dbReference>
<dbReference type="Gene3D" id="1.20.1250.20">
    <property type="entry name" value="MFS general substrate transporter like domains"/>
    <property type="match status" value="1"/>
</dbReference>
<dbReference type="InterPro" id="IPR011701">
    <property type="entry name" value="MFS"/>
</dbReference>
<dbReference type="InterPro" id="IPR020846">
    <property type="entry name" value="MFS_dom"/>
</dbReference>
<dbReference type="InterPro" id="IPR036259">
    <property type="entry name" value="MFS_trans_sf"/>
</dbReference>
<dbReference type="InterPro" id="IPR005829">
    <property type="entry name" value="Sugar_transporter_CS"/>
</dbReference>
<dbReference type="InterPro" id="IPR001958">
    <property type="entry name" value="Tet-R_TetA/multi-R_MdtG-like"/>
</dbReference>
<dbReference type="NCBIfam" id="NF012174">
    <property type="entry name" value="tet_MFS_A_B_C_D"/>
    <property type="match status" value="1"/>
</dbReference>
<dbReference type="NCBIfam" id="NF012186">
    <property type="entry name" value="tet_MFS_D"/>
    <property type="match status" value="1"/>
</dbReference>
<dbReference type="PANTHER" id="PTHR23504:SF15">
    <property type="entry name" value="MAJOR FACILITATOR SUPERFAMILY (MFS) PROFILE DOMAIN-CONTAINING PROTEIN"/>
    <property type="match status" value="1"/>
</dbReference>
<dbReference type="PANTHER" id="PTHR23504">
    <property type="entry name" value="MAJOR FACILITATOR SUPERFAMILY DOMAIN-CONTAINING PROTEIN 10"/>
    <property type="match status" value="1"/>
</dbReference>
<dbReference type="Pfam" id="PF07690">
    <property type="entry name" value="MFS_1"/>
    <property type="match status" value="1"/>
</dbReference>
<dbReference type="PRINTS" id="PR01035">
    <property type="entry name" value="TCRTETA"/>
</dbReference>
<dbReference type="SUPFAM" id="SSF103473">
    <property type="entry name" value="MFS general substrate transporter"/>
    <property type="match status" value="1"/>
</dbReference>
<dbReference type="PROSITE" id="PS50850">
    <property type="entry name" value="MFS"/>
    <property type="match status" value="1"/>
</dbReference>
<dbReference type="PROSITE" id="PS00216">
    <property type="entry name" value="SUGAR_TRANSPORT_1"/>
    <property type="match status" value="1"/>
</dbReference>
<name>TCR4_SALOR</name>
<proteinExistence type="inferred from homology"/>
<evidence type="ECO:0000255" key="1"/>
<evidence type="ECO:0000305" key="2"/>
<accession>P33733</accession>
<comment type="function">
    <text>Resistance to tetracycline by an active tetracycline efflux. This is an energy-dependent process that decreases the accumulation of the antibiotic in whole cells. This protein functions as a metal-tetracycline/H(+) antiporter.</text>
</comment>
<comment type="subcellular location">
    <subcellularLocation>
        <location>Cell inner membrane</location>
        <topology>Multi-pass membrane protein</topology>
    </subcellularLocation>
</comment>
<comment type="similarity">
    <text evidence="2">Belongs to the major facilitator superfamily. TCR/Tet family.</text>
</comment>
<sequence>MNKPAVIALVITLLDAMGIGLIMPVLPSLLREYLPEADVANHYGILLALYAVMQVCFAPLLGRWSDKLGRRPVLLLSLAGAAFDYTLLALSNVLWMLYLGRIISGITGATGAVAASVVADSTAVSERTAWFGRLGAAFGAGLIAGPAIGGLAGDISPHLPFVIAAILNACTFLMVFFIFKPAVQTEEKPADEKQESAGISFITLLKPLALLLFVFFTAQLIGQIPATVWVLFTESRFAWDSAAVGFSLAGLGAMHALFQAVVAGALAKRLSEKTIIFAGFIADATAFLLMSAITSGWMVYPVLILLAGGGIALPALQGIISAGASAANQGKLQGVLVSLTNLTGVAGPLLFAFIFSQTQQSADGTVWLIGTALYGLLLAICLLIRKPAPVAATC</sequence>
<geneLocation type="plasmid">
    <name>pIP173</name>
</geneLocation>
<gene>
    <name type="primary">tetA</name>
</gene>
<feature type="chain" id="PRO_0000173395" description="Tetracycline resistance protein, class D">
    <location>
        <begin position="1"/>
        <end position="394"/>
    </location>
</feature>
<feature type="transmembrane region" description="Helical" evidence="1">
    <location>
        <begin position="6"/>
        <end position="26"/>
    </location>
</feature>
<feature type="transmembrane region" description="Helical" evidence="1">
    <location>
        <begin position="42"/>
        <end position="62"/>
    </location>
</feature>
<feature type="transmembrane region" description="Helical" evidence="1">
    <location>
        <begin position="73"/>
        <end position="93"/>
    </location>
</feature>
<feature type="transmembrane region" description="Helical" evidence="1">
    <location>
        <begin position="94"/>
        <end position="114"/>
    </location>
</feature>
<feature type="transmembrane region" description="Helical" evidence="1">
    <location>
        <begin position="135"/>
        <end position="155"/>
    </location>
</feature>
<feature type="transmembrane region" description="Helical" evidence="1">
    <location>
        <begin position="159"/>
        <end position="179"/>
    </location>
</feature>
<feature type="transmembrane region" description="Helical" evidence="1">
    <location>
        <begin position="198"/>
        <end position="218"/>
    </location>
</feature>
<feature type="transmembrane region" description="Helical" evidence="1">
    <location>
        <begin position="243"/>
        <end position="263"/>
    </location>
</feature>
<feature type="transmembrane region" description="Helical" evidence="1">
    <location>
        <begin position="274"/>
        <end position="294"/>
    </location>
</feature>
<feature type="transmembrane region" description="Helical" evidence="1">
    <location>
        <begin position="296"/>
        <end position="316"/>
    </location>
</feature>
<feature type="transmembrane region" description="Helical" evidence="1">
    <location>
        <begin position="335"/>
        <end position="355"/>
    </location>
</feature>
<feature type="transmembrane region" description="Helical" evidence="1">
    <location>
        <begin position="364"/>
        <end position="384"/>
    </location>
</feature>